<name>PTRD1_MOUSE</name>
<proteinExistence type="evidence at protein level"/>
<dbReference type="EC" id="3.1.1.29" evidence="1"/>
<dbReference type="EMBL" id="AC162932">
    <property type="status" value="NOT_ANNOTATED_CDS"/>
    <property type="molecule type" value="Genomic_DNA"/>
</dbReference>
<dbReference type="EMBL" id="CH466623">
    <property type="protein sequence ID" value="EDL01370.1"/>
    <property type="molecule type" value="Genomic_DNA"/>
</dbReference>
<dbReference type="CCDS" id="CCDS56829.1"/>
<dbReference type="RefSeq" id="NP_001191841.1">
    <property type="nucleotide sequence ID" value="NM_001204912.2"/>
</dbReference>
<dbReference type="SMR" id="D3Z4S3"/>
<dbReference type="FunCoup" id="D3Z4S3">
    <property type="interactions" value="955"/>
</dbReference>
<dbReference type="STRING" id="10090.ENSMUSP00000137070"/>
<dbReference type="PhosphoSitePlus" id="D3Z4S3"/>
<dbReference type="jPOST" id="D3Z4S3"/>
<dbReference type="PaxDb" id="10090-ENSMUSP00000137070"/>
<dbReference type="PeptideAtlas" id="D3Z4S3"/>
<dbReference type="ProteomicsDB" id="301919"/>
<dbReference type="Pumba" id="D3Z4S3"/>
<dbReference type="Antibodypedia" id="13171">
    <property type="antibodies" value="10 antibodies from 8 providers"/>
</dbReference>
<dbReference type="Ensembl" id="ENSMUST00000179139.3">
    <property type="protein sequence ID" value="ENSMUSP00000137070.2"/>
    <property type="gene ID" value="ENSMUSG00000096199.3"/>
</dbReference>
<dbReference type="GeneID" id="69709"/>
<dbReference type="KEGG" id="mmu:69709"/>
<dbReference type="UCSC" id="uc029rqo.1">
    <property type="organism name" value="mouse"/>
</dbReference>
<dbReference type="AGR" id="MGI:1916959"/>
<dbReference type="CTD" id="391356"/>
<dbReference type="MGI" id="MGI:1916959">
    <property type="gene designation" value="Ptrhd1"/>
</dbReference>
<dbReference type="VEuPathDB" id="HostDB:ENSMUSG00000096199"/>
<dbReference type="eggNOG" id="KOG3305">
    <property type="taxonomic scope" value="Eukaryota"/>
</dbReference>
<dbReference type="GeneTree" id="ENSGT00500000044959"/>
<dbReference type="HOGENOM" id="CLU_119261_0_1_1"/>
<dbReference type="InParanoid" id="D3Z4S3"/>
<dbReference type="OMA" id="AIIAQCC"/>
<dbReference type="OrthoDB" id="201213at2759"/>
<dbReference type="PhylomeDB" id="D3Z4S3"/>
<dbReference type="TreeFam" id="TF353726"/>
<dbReference type="BioGRID-ORCS" id="69709">
    <property type="hits" value="2 hits in 75 CRISPR screens"/>
</dbReference>
<dbReference type="ChiTaRS" id="Ptrhd1">
    <property type="organism name" value="mouse"/>
</dbReference>
<dbReference type="PRO" id="PR:D3Z4S3"/>
<dbReference type="Proteomes" id="UP000000589">
    <property type="component" value="Chromosome 12"/>
</dbReference>
<dbReference type="RNAct" id="D3Z4S3">
    <property type="molecule type" value="protein"/>
</dbReference>
<dbReference type="Bgee" id="ENSMUSG00000096199">
    <property type="expression patterns" value="Expressed in internal carotid artery and 250 other cell types or tissues"/>
</dbReference>
<dbReference type="GO" id="GO:0004045">
    <property type="term" value="F:peptidyl-tRNA hydrolase activity"/>
    <property type="evidence" value="ECO:0007669"/>
    <property type="project" value="UniProtKB-EC"/>
</dbReference>
<dbReference type="Gene3D" id="3.40.1490.10">
    <property type="entry name" value="Bit1"/>
    <property type="match status" value="1"/>
</dbReference>
<dbReference type="InterPro" id="IPR023476">
    <property type="entry name" value="Pep_tRNA_hydro_II_dom_sf"/>
</dbReference>
<dbReference type="InterPro" id="IPR002833">
    <property type="entry name" value="PTH2"/>
</dbReference>
<dbReference type="InterPro" id="IPR042237">
    <property type="entry name" value="PTRHD1"/>
</dbReference>
<dbReference type="PANTHER" id="PTHR46194">
    <property type="entry name" value="PEPTIDYL-TRNA HYDROLASE PTRHD1-RELATED"/>
    <property type="match status" value="1"/>
</dbReference>
<dbReference type="PANTHER" id="PTHR46194:SF1">
    <property type="entry name" value="PEPTIDYL-TRNA HYDROLASE PTRHD1-RELATED"/>
    <property type="match status" value="1"/>
</dbReference>
<dbReference type="Pfam" id="PF01981">
    <property type="entry name" value="PTH2"/>
    <property type="match status" value="1"/>
</dbReference>
<dbReference type="SUPFAM" id="SSF102462">
    <property type="entry name" value="Peptidyl-tRNA hydrolase II"/>
    <property type="match status" value="1"/>
</dbReference>
<protein>
    <recommendedName>
        <fullName evidence="1">Putative peptidyl-tRNA hydrolase PTRHD1</fullName>
        <ecNumber evidence="1">3.1.1.29</ecNumber>
    </recommendedName>
    <alternativeName>
        <fullName>Peptidyl-tRNA hydrolase domain-containing protein 1</fullName>
    </alternativeName>
</protein>
<sequence>MHRKVRPASLMIRKMACSGVEPQILVQYLVLRKDLSQAPFSWPTGALVAQACHAATAALHLHRDHPHTAAYLRELGRMRKVVLEAADETTLKELAETLQQKNIDHTLWLEQPENIATCIALRPYPKEEVSQYLKKFRLFK</sequence>
<feature type="chain" id="PRO_0000412069" description="Putative peptidyl-tRNA hydrolase PTRHD1">
    <location>
        <begin position="1"/>
        <end position="140"/>
    </location>
</feature>
<accession>D3Z4S3</accession>
<keyword id="KW-0378">Hydrolase</keyword>
<keyword id="KW-1185">Reference proteome</keyword>
<reference key="1">
    <citation type="journal article" date="2009" name="PLoS Biol.">
        <title>Lineage-specific biology revealed by a finished genome assembly of the mouse.</title>
        <authorList>
            <person name="Church D.M."/>
            <person name="Goodstadt L."/>
            <person name="Hillier L.W."/>
            <person name="Zody M.C."/>
            <person name="Goldstein S."/>
            <person name="She X."/>
            <person name="Bult C.J."/>
            <person name="Agarwala R."/>
            <person name="Cherry J.L."/>
            <person name="DiCuccio M."/>
            <person name="Hlavina W."/>
            <person name="Kapustin Y."/>
            <person name="Meric P."/>
            <person name="Maglott D."/>
            <person name="Birtle Z."/>
            <person name="Marques A.C."/>
            <person name="Graves T."/>
            <person name="Zhou S."/>
            <person name="Teague B."/>
            <person name="Potamousis K."/>
            <person name="Churas C."/>
            <person name="Place M."/>
            <person name="Herschleb J."/>
            <person name="Runnheim R."/>
            <person name="Forrest D."/>
            <person name="Amos-Landgraf J."/>
            <person name="Schwartz D.C."/>
            <person name="Cheng Z."/>
            <person name="Lindblad-Toh K."/>
            <person name="Eichler E.E."/>
            <person name="Ponting C.P."/>
        </authorList>
    </citation>
    <scope>NUCLEOTIDE SEQUENCE [LARGE SCALE GENOMIC DNA]</scope>
    <source>
        <strain>C57BL/6J</strain>
    </source>
</reference>
<reference key="2">
    <citation type="submission" date="2005-07" db="EMBL/GenBank/DDBJ databases">
        <authorList>
            <person name="Mural R.J."/>
            <person name="Adams M.D."/>
            <person name="Myers E.W."/>
            <person name="Smith H.O."/>
            <person name="Venter J.C."/>
        </authorList>
    </citation>
    <scope>NUCLEOTIDE SEQUENCE [LARGE SCALE GENOMIC DNA]</scope>
</reference>
<reference key="3">
    <citation type="journal article" date="2010" name="Cell">
        <title>A tissue-specific atlas of mouse protein phosphorylation and expression.</title>
        <authorList>
            <person name="Huttlin E.L."/>
            <person name="Jedrychowski M.P."/>
            <person name="Elias J.E."/>
            <person name="Goswami T."/>
            <person name="Rad R."/>
            <person name="Beausoleil S.A."/>
            <person name="Villen J."/>
            <person name="Haas W."/>
            <person name="Sowa M.E."/>
            <person name="Gygi S.P."/>
        </authorList>
    </citation>
    <scope>IDENTIFICATION BY MASS SPECTROMETRY [LARGE SCALE ANALYSIS]</scope>
    <source>
        <tissue>Brain</tissue>
        <tissue>Brown adipose tissue</tissue>
        <tissue>Heart</tissue>
        <tissue>Kidney</tissue>
        <tissue>Testis</tissue>
    </source>
</reference>
<evidence type="ECO:0000250" key="1">
    <source>
        <dbReference type="UniProtKB" id="Q6GMV3"/>
    </source>
</evidence>
<evidence type="ECO:0000305" key="2"/>
<organism>
    <name type="scientific">Mus musculus</name>
    <name type="common">Mouse</name>
    <dbReference type="NCBI Taxonomy" id="10090"/>
    <lineage>
        <taxon>Eukaryota</taxon>
        <taxon>Metazoa</taxon>
        <taxon>Chordata</taxon>
        <taxon>Craniata</taxon>
        <taxon>Vertebrata</taxon>
        <taxon>Euteleostomi</taxon>
        <taxon>Mammalia</taxon>
        <taxon>Eutheria</taxon>
        <taxon>Euarchontoglires</taxon>
        <taxon>Glires</taxon>
        <taxon>Rodentia</taxon>
        <taxon>Myomorpha</taxon>
        <taxon>Muroidea</taxon>
        <taxon>Muridae</taxon>
        <taxon>Murinae</taxon>
        <taxon>Mus</taxon>
        <taxon>Mus</taxon>
    </lineage>
</organism>
<comment type="function">
    <text evidence="1">As a putative peptidyl-tRNA hydrolase, it might be involved in releasing tRNAs from the ribosome during protein synthesis. Some evidence, however, suggests that it lacks peptidyl-tRNA hydrolase activity.</text>
</comment>
<comment type="catalytic activity">
    <reaction evidence="1">
        <text>an N-acyl-L-alpha-aminoacyl-tRNA + H2O = an N-acyl-L-amino acid + a tRNA + H(+)</text>
        <dbReference type="Rhea" id="RHEA:54448"/>
        <dbReference type="Rhea" id="RHEA-COMP:10123"/>
        <dbReference type="Rhea" id="RHEA-COMP:13883"/>
        <dbReference type="ChEBI" id="CHEBI:15377"/>
        <dbReference type="ChEBI" id="CHEBI:15378"/>
        <dbReference type="ChEBI" id="CHEBI:59874"/>
        <dbReference type="ChEBI" id="CHEBI:78442"/>
        <dbReference type="ChEBI" id="CHEBI:138191"/>
        <dbReference type="EC" id="3.1.1.29"/>
    </reaction>
</comment>
<comment type="similarity">
    <text evidence="2">Belongs to the PTH2 family. PTRHD1 subfamily.</text>
</comment>
<gene>
    <name type="primary">Ptrhd1</name>
</gene>